<reference key="1">
    <citation type="journal article" date="2003" name="DNA Res.">
        <title>Complete sequence and analysis of the plastid genome of the unicellular red alga Cyanidioschyzon merolae.</title>
        <authorList>
            <person name="Ohta N."/>
            <person name="Matsuzaki M."/>
            <person name="Misumi O."/>
            <person name="Miyagishima S.-Y."/>
            <person name="Nozaki H."/>
            <person name="Tanaka K."/>
            <person name="Shin-i T."/>
            <person name="Kohara Y."/>
            <person name="Kuroiwa T."/>
        </authorList>
    </citation>
    <scope>NUCLEOTIDE SEQUENCE [LARGE SCALE GENOMIC DNA]</scope>
    <source>
        <strain>NIES-3377 / 10D</strain>
    </source>
</reference>
<name>PSBT_CYAM1</name>
<feature type="chain" id="PRO_0000217924" description="Photosystem II reaction center protein T">
    <location>
        <begin position="1"/>
        <end position="32"/>
    </location>
</feature>
<feature type="transmembrane region" description="Helical" evidence="1">
    <location>
        <begin position="3"/>
        <end position="23"/>
    </location>
</feature>
<proteinExistence type="inferred from homology"/>
<keyword id="KW-0150">Chloroplast</keyword>
<keyword id="KW-0472">Membrane</keyword>
<keyword id="KW-0602">Photosynthesis</keyword>
<keyword id="KW-0604">Photosystem II</keyword>
<keyword id="KW-0934">Plastid</keyword>
<keyword id="KW-1185">Reference proteome</keyword>
<keyword id="KW-0793">Thylakoid</keyword>
<keyword id="KW-0812">Transmembrane</keyword>
<keyword id="KW-1133">Transmembrane helix</keyword>
<geneLocation type="chloroplast"/>
<evidence type="ECO:0000255" key="1">
    <source>
        <dbReference type="HAMAP-Rule" id="MF_00808"/>
    </source>
</evidence>
<gene>
    <name evidence="1" type="primary">psbT</name>
</gene>
<comment type="function">
    <text evidence="1">Found at the monomer-monomer interface of the photosystem II (PS II) dimer, plays a role in assembly and dimerization of PSII. PSII is a light-driven water plastoquinone oxidoreductase, using light energy to abstract electrons from H(2)O, generating a proton gradient subsequently used for ATP formation.</text>
</comment>
<comment type="subunit">
    <text evidence="1">PSII is composed of 1 copy each of membrane proteins PsbA, PsbB, PsbC, PsbD, PsbE, PsbF, PsbH, PsbI, PsbJ, PsbK, PsbL, PsbM, PsbT, PsbY, PsbZ, Psb30/Ycf12, at least 3 peripheral proteins of the oxygen-evolving complex and a large number of cofactors. It forms dimeric complexes.</text>
</comment>
<comment type="subcellular location">
    <subcellularLocation>
        <location evidence="1">Plastid</location>
        <location evidence="1">Chloroplast thylakoid membrane</location>
        <topology evidence="1">Single-pass membrane protein</topology>
    </subcellularLocation>
</comment>
<comment type="similarity">
    <text evidence="1">Belongs to the PsbT family.</text>
</comment>
<dbReference type="EMBL" id="AB002583">
    <property type="protein sequence ID" value="BAC76198.1"/>
    <property type="molecule type" value="Genomic_DNA"/>
</dbReference>
<dbReference type="RefSeq" id="NP_849036.1">
    <property type="nucleotide sequence ID" value="NC_004799.1"/>
</dbReference>
<dbReference type="SMR" id="Q85FZ4"/>
<dbReference type="STRING" id="280699.Q85FZ4"/>
<dbReference type="EnsemblPlants" id="CMV125CT">
    <property type="protein sequence ID" value="CMV125CT"/>
    <property type="gene ID" value="CMV125C"/>
</dbReference>
<dbReference type="GeneID" id="844958"/>
<dbReference type="Gramene" id="CMV125CT">
    <property type="protein sequence ID" value="CMV125CT"/>
    <property type="gene ID" value="CMV125C"/>
</dbReference>
<dbReference type="KEGG" id="cme:CymeCp104"/>
<dbReference type="HOGENOM" id="CLU_217078_0_0_1"/>
<dbReference type="Proteomes" id="UP000007014">
    <property type="component" value="Chloroplast"/>
</dbReference>
<dbReference type="GO" id="GO:0009535">
    <property type="term" value="C:chloroplast thylakoid membrane"/>
    <property type="evidence" value="ECO:0007669"/>
    <property type="project" value="UniProtKB-SubCell"/>
</dbReference>
<dbReference type="GO" id="GO:0009539">
    <property type="term" value="C:photosystem II reaction center"/>
    <property type="evidence" value="ECO:0007669"/>
    <property type="project" value="InterPro"/>
</dbReference>
<dbReference type="GO" id="GO:0015979">
    <property type="term" value="P:photosynthesis"/>
    <property type="evidence" value="ECO:0007669"/>
    <property type="project" value="UniProtKB-UniRule"/>
</dbReference>
<dbReference type="HAMAP" id="MF_00808">
    <property type="entry name" value="PSII_PsbT"/>
    <property type="match status" value="1"/>
</dbReference>
<dbReference type="InterPro" id="IPR001743">
    <property type="entry name" value="PSII_PsbT"/>
</dbReference>
<dbReference type="InterPro" id="IPR037268">
    <property type="entry name" value="PSII_PsbT_sf"/>
</dbReference>
<dbReference type="PANTHER" id="PTHR36411">
    <property type="match status" value="1"/>
</dbReference>
<dbReference type="PANTHER" id="PTHR36411:SF2">
    <property type="entry name" value="PHOTOSYSTEM II REACTION CENTER PROTEIN T"/>
    <property type="match status" value="1"/>
</dbReference>
<dbReference type="Pfam" id="PF01405">
    <property type="entry name" value="PsbT"/>
    <property type="match status" value="1"/>
</dbReference>
<dbReference type="SUPFAM" id="SSF161029">
    <property type="entry name" value="Photosystem II reaction center protein T, PsbT"/>
    <property type="match status" value="1"/>
</dbReference>
<accession>Q85FZ4</accession>
<protein>
    <recommendedName>
        <fullName evidence="1">Photosystem II reaction center protein T</fullName>
        <shortName evidence="1">PSII-T</shortName>
    </recommendedName>
</protein>
<organism>
    <name type="scientific">Cyanidioschyzon merolae (strain NIES-3377 / 10D)</name>
    <name type="common">Unicellular red alga</name>
    <dbReference type="NCBI Taxonomy" id="280699"/>
    <lineage>
        <taxon>Eukaryota</taxon>
        <taxon>Rhodophyta</taxon>
        <taxon>Bangiophyceae</taxon>
        <taxon>Cyanidiales</taxon>
        <taxon>Cyanidiaceae</taxon>
        <taxon>Cyanidioschyzon</taxon>
    </lineage>
</organism>
<sequence length="32" mass="3789">MEALVYVFLLIGTLMIIFFAIFFREPPRIAKK</sequence>